<dbReference type="EMBL" id="L77119">
    <property type="protein sequence ID" value="AAC37062.1"/>
    <property type="molecule type" value="Genomic_DNA"/>
</dbReference>
<dbReference type="PIR" id="D64516">
    <property type="entry name" value="D64516"/>
</dbReference>
<dbReference type="RefSeq" id="WP_010890097.1">
    <property type="nucleotide sequence ID" value="NC_001733.1"/>
</dbReference>
<dbReference type="SMR" id="Q60303"/>
<dbReference type="PaxDb" id="243232-MJ_ECS04"/>
<dbReference type="EnsemblBacteria" id="AAC37062">
    <property type="protein sequence ID" value="AAC37062"/>
    <property type="gene ID" value="MJ_ECS04"/>
</dbReference>
<dbReference type="GeneID" id="1450831"/>
<dbReference type="KEGG" id="mja:MJ_ECS04"/>
<dbReference type="HOGENOM" id="CLU_1881088_0_0_2"/>
<dbReference type="InParanoid" id="Q60303"/>
<dbReference type="Proteomes" id="UP000000805">
    <property type="component" value="Plasmid pDSM2661_2"/>
</dbReference>
<dbReference type="Gene3D" id="3.40.220.20">
    <property type="entry name" value="Nsp3, SUD-M subdomain"/>
    <property type="match status" value="1"/>
</dbReference>
<dbReference type="InterPro" id="IPR038400">
    <property type="entry name" value="NSP3_SUD-M_sf_bCoV"/>
</dbReference>
<protein>
    <recommendedName>
        <fullName>Uncharacterized protein MJECS04</fullName>
    </recommendedName>
</protein>
<accession>Q60303</accession>
<organism>
    <name type="scientific">Methanocaldococcus jannaschii (strain ATCC 43067 / DSM 2661 / JAL-1 / JCM 10045 / NBRC 100440)</name>
    <name type="common">Methanococcus jannaschii</name>
    <dbReference type="NCBI Taxonomy" id="243232"/>
    <lineage>
        <taxon>Archaea</taxon>
        <taxon>Methanobacteriati</taxon>
        <taxon>Methanobacteriota</taxon>
        <taxon>Methanomada group</taxon>
        <taxon>Methanococci</taxon>
        <taxon>Methanococcales</taxon>
        <taxon>Methanocaldococcaceae</taxon>
        <taxon>Methanocaldococcus</taxon>
    </lineage>
</organism>
<proteinExistence type="predicted"/>
<gene>
    <name type="ordered locus">MJECS04</name>
</gene>
<geneLocation type="plasmid">
    <name>small ECE</name>
</geneLocation>
<keyword id="KW-0614">Plasmid</keyword>
<keyword id="KW-1185">Reference proteome</keyword>
<sequence>MLKKAIIKLLGIDNYIEKIEELEGERKEIFENFEKLNKKLDNFENELNFIKKEIERIQLEFNNVINSNNNDYVSKKELNDIVNQLNTLSTLVNGLIINISHGNNLKESSNTVDDVKNRLLELLQSEKDYCITEIN</sequence>
<reference key="1">
    <citation type="journal article" date="1996" name="Science">
        <title>Complete genome sequence of the methanogenic archaeon, Methanococcus jannaschii.</title>
        <authorList>
            <person name="Bult C.J."/>
            <person name="White O."/>
            <person name="Olsen G.J."/>
            <person name="Zhou L."/>
            <person name="Fleischmann R.D."/>
            <person name="Sutton G.G."/>
            <person name="Blake J.A."/>
            <person name="FitzGerald L.M."/>
            <person name="Clayton R.A."/>
            <person name="Gocayne J.D."/>
            <person name="Kerlavage A.R."/>
            <person name="Dougherty B.A."/>
            <person name="Tomb J.-F."/>
            <person name="Adams M.D."/>
            <person name="Reich C.I."/>
            <person name="Overbeek R."/>
            <person name="Kirkness E.F."/>
            <person name="Weinstock K.G."/>
            <person name="Merrick J.M."/>
            <person name="Glodek A."/>
            <person name="Scott J.L."/>
            <person name="Geoghagen N.S.M."/>
            <person name="Weidman J.F."/>
            <person name="Fuhrmann J.L."/>
            <person name="Nguyen D."/>
            <person name="Utterback T.R."/>
            <person name="Kelley J.M."/>
            <person name="Peterson J.D."/>
            <person name="Sadow P.W."/>
            <person name="Hanna M.C."/>
            <person name="Cotton M.D."/>
            <person name="Roberts K.M."/>
            <person name="Hurst M.A."/>
            <person name="Kaine B.P."/>
            <person name="Borodovsky M."/>
            <person name="Klenk H.-P."/>
            <person name="Fraser C.M."/>
            <person name="Smith H.O."/>
            <person name="Woese C.R."/>
            <person name="Venter J.C."/>
        </authorList>
    </citation>
    <scope>NUCLEOTIDE SEQUENCE [LARGE SCALE GENOMIC DNA]</scope>
    <source>
        <strain>ATCC 43067 / DSM 2661 / JAL-1 / JCM 10045 / NBRC 100440</strain>
    </source>
</reference>
<name>Y3404_METJA</name>
<feature type="chain" id="PRO_0000107485" description="Uncharacterized protein MJECS04">
    <location>
        <begin position="1"/>
        <end position="135"/>
    </location>
</feature>